<proteinExistence type="evidence at protein level"/>
<reference key="1">
    <citation type="journal article" date="1997" name="Gene">
        <title>A group 3 LEA cDNA of rice, responsive to abscisic acid, but not to jasmonic acid, shows variety-specific differences in salt stress response.</title>
        <authorList>
            <person name="Moons A."/>
            <person name="De Keyser A."/>
            <person name="Van Montagu M."/>
        </authorList>
    </citation>
    <scope>NUCLEOTIDE SEQUENCE [MRNA]</scope>
    <scope>INDUCTION</scope>
    <source>
        <strain>cv. Pokkali</strain>
        <tissue>Seedling root</tissue>
    </source>
</reference>
<reference key="2">
    <citation type="journal article" date="2007" name="Theor. Appl. Genet.">
        <title>Over-expression of a LEA gene in rice improves drought resistance under the field conditions.</title>
        <authorList>
            <person name="Xiao B."/>
            <person name="Huang Y."/>
            <person name="Tang N."/>
            <person name="Xiong L."/>
        </authorList>
    </citation>
    <scope>NUCLEOTIDE SEQUENCE [MRNA]</scope>
    <scope>FUNCTION</scope>
    <scope>INDUCTION</scope>
    <source>
        <strain>cv. Minghui 63</strain>
    </source>
</reference>
<reference key="3">
    <citation type="journal article" date="2005" name="PLoS Biol.">
        <title>The genomes of Oryza sativa: a history of duplications.</title>
        <authorList>
            <person name="Yu J."/>
            <person name="Wang J."/>
            <person name="Lin W."/>
            <person name="Li S."/>
            <person name="Li H."/>
            <person name="Zhou J."/>
            <person name="Ni P."/>
            <person name="Dong W."/>
            <person name="Hu S."/>
            <person name="Zeng C."/>
            <person name="Zhang J."/>
            <person name="Zhang Y."/>
            <person name="Li R."/>
            <person name="Xu Z."/>
            <person name="Li S."/>
            <person name="Li X."/>
            <person name="Zheng H."/>
            <person name="Cong L."/>
            <person name="Lin L."/>
            <person name="Yin J."/>
            <person name="Geng J."/>
            <person name="Li G."/>
            <person name="Shi J."/>
            <person name="Liu J."/>
            <person name="Lv H."/>
            <person name="Li J."/>
            <person name="Wang J."/>
            <person name="Deng Y."/>
            <person name="Ran L."/>
            <person name="Shi X."/>
            <person name="Wang X."/>
            <person name="Wu Q."/>
            <person name="Li C."/>
            <person name="Ren X."/>
            <person name="Wang J."/>
            <person name="Wang X."/>
            <person name="Li D."/>
            <person name="Liu D."/>
            <person name="Zhang X."/>
            <person name="Ji Z."/>
            <person name="Zhao W."/>
            <person name="Sun Y."/>
            <person name="Zhang Z."/>
            <person name="Bao J."/>
            <person name="Han Y."/>
            <person name="Dong L."/>
            <person name="Ji J."/>
            <person name="Chen P."/>
            <person name="Wu S."/>
            <person name="Liu J."/>
            <person name="Xiao Y."/>
            <person name="Bu D."/>
            <person name="Tan J."/>
            <person name="Yang L."/>
            <person name="Ye C."/>
            <person name="Zhang J."/>
            <person name="Xu J."/>
            <person name="Zhou Y."/>
            <person name="Yu Y."/>
            <person name="Zhang B."/>
            <person name="Zhuang S."/>
            <person name="Wei H."/>
            <person name="Liu B."/>
            <person name="Lei M."/>
            <person name="Yu H."/>
            <person name="Li Y."/>
            <person name="Xu H."/>
            <person name="Wei S."/>
            <person name="He X."/>
            <person name="Fang L."/>
            <person name="Zhang Z."/>
            <person name="Zhang Y."/>
            <person name="Huang X."/>
            <person name="Su Z."/>
            <person name="Tong W."/>
            <person name="Li J."/>
            <person name="Tong Z."/>
            <person name="Li S."/>
            <person name="Ye J."/>
            <person name="Wang L."/>
            <person name="Fang L."/>
            <person name="Lei T."/>
            <person name="Chen C.-S."/>
            <person name="Chen H.-C."/>
            <person name="Xu Z."/>
            <person name="Li H."/>
            <person name="Huang H."/>
            <person name="Zhang F."/>
            <person name="Xu H."/>
            <person name="Li N."/>
            <person name="Zhao C."/>
            <person name="Li S."/>
            <person name="Dong L."/>
            <person name="Huang Y."/>
            <person name="Li L."/>
            <person name="Xi Y."/>
            <person name="Qi Q."/>
            <person name="Li W."/>
            <person name="Zhang B."/>
            <person name="Hu W."/>
            <person name="Zhang Y."/>
            <person name="Tian X."/>
            <person name="Jiao Y."/>
            <person name="Liang X."/>
            <person name="Jin J."/>
            <person name="Gao L."/>
            <person name="Zheng W."/>
            <person name="Hao B."/>
            <person name="Liu S.-M."/>
            <person name="Wang W."/>
            <person name="Yuan L."/>
            <person name="Cao M."/>
            <person name="McDermott J."/>
            <person name="Samudrala R."/>
            <person name="Wang J."/>
            <person name="Wong G.K.-S."/>
            <person name="Yang H."/>
        </authorList>
    </citation>
    <scope>NUCLEOTIDE SEQUENCE [LARGE SCALE GENOMIC DNA]</scope>
    <source>
        <strain>cv. 93-11</strain>
    </source>
</reference>
<reference key="4">
    <citation type="journal article" date="2003" name="J. Plant Physiol.">
        <title>Accumulation of LEA proteins in salt (NaCl) stressed young seedlings of rice (Oryza sativa L.) cultivar Bura Rata and their degradation during recovery from salinity stress.</title>
        <authorList>
            <person name="Chourey K."/>
            <person name="Ramani S."/>
            <person name="Apte S.K."/>
        </authorList>
    </citation>
    <scope>PROTEIN SEQUENCE OF 28-46</scope>
    <scope>INDUCTION</scope>
    <source>
        <strain>cv. Bura Rata</strain>
        <tissue>Seedling leaf</tissue>
    </source>
</reference>
<reference key="5">
    <citation type="journal article" date="1995" name="Plant Physiol.">
        <title>Molecular and physiological responses to abscisic acid and salts in roots of salt-sensitive and salt-tolerant Indica rice varieties.</title>
        <authorList>
            <person name="Moons A."/>
            <person name="Bauw G."/>
            <person name="Prinsen E."/>
            <person name="Van Montagu M."/>
            <person name="Van der Straeten D."/>
        </authorList>
    </citation>
    <scope>PROTEIN SEQUENCE OF 97-103; 143-154 AND 164-173</scope>
    <scope>INDUCTION</scope>
    <source>
        <strain>cv. Pokkali</strain>
        <tissue>Seedling root</tissue>
    </source>
</reference>
<reference key="6">
    <citation type="journal article" date="2008" name="New Phytol.">
        <title>Abscisic acid regulates gene expression in cortical fiber cells and silica cells of rice shoots.</title>
        <authorList>
            <person name="Shobbar Z.S."/>
            <person name="Oane R."/>
            <person name="Gamuyao R."/>
            <person name="De Palma J."/>
            <person name="Malboobi M.A."/>
            <person name="Karimzadeh G."/>
            <person name="Javaran M.J."/>
            <person name="Bennett J."/>
        </authorList>
    </citation>
    <scope>TISSUE SPECIFICITY</scope>
</reference>
<name>LEA19_ORYSI</name>
<protein>
    <recommendedName>
        <fullName evidence="9">Late embryogenesis abundant protein 19</fullName>
        <shortName evidence="9">OsLEA19</shortName>
    </recommendedName>
    <alternativeName>
        <fullName evidence="9">Late embryogenesis abundant protein, group 3</fullName>
        <shortName evidence="9">LEA-3</shortName>
    </alternativeName>
    <alternativeName>
        <fullName evidence="8">OsLEA3-1</fullName>
    </alternativeName>
</protein>
<feature type="chain" id="PRO_0000296250" description="Late embryogenesis abundant protein 19">
    <location>
        <begin position="1"/>
        <end position="200"/>
    </location>
</feature>
<feature type="region of interest" description="Disordered" evidence="2">
    <location>
        <begin position="1"/>
        <end position="158"/>
    </location>
</feature>
<feature type="region of interest" description="Disordered" evidence="2">
    <location>
        <begin position="172"/>
        <end position="200"/>
    </location>
</feature>
<feature type="coiled-coil region" evidence="1">
    <location>
        <begin position="52"/>
        <end position="81"/>
    </location>
</feature>
<feature type="compositionally biased region" description="Basic and acidic residues" evidence="2">
    <location>
        <begin position="13"/>
        <end position="23"/>
    </location>
</feature>
<feature type="compositionally biased region" description="Basic and acidic residues" evidence="2">
    <location>
        <begin position="30"/>
        <end position="42"/>
    </location>
</feature>
<feature type="compositionally biased region" description="Basic and acidic residues" evidence="2">
    <location>
        <begin position="53"/>
        <end position="81"/>
    </location>
</feature>
<feature type="compositionally biased region" description="Basic and acidic residues" evidence="2">
    <location>
        <begin position="88"/>
        <end position="97"/>
    </location>
</feature>
<feature type="compositionally biased region" description="Basic and acidic residues" evidence="2">
    <location>
        <begin position="105"/>
        <end position="114"/>
    </location>
</feature>
<feature type="compositionally biased region" description="Low complexity" evidence="2">
    <location>
        <begin position="115"/>
        <end position="130"/>
    </location>
</feature>
<feature type="compositionally biased region" description="Polar residues" evidence="2">
    <location>
        <begin position="145"/>
        <end position="156"/>
    </location>
</feature>
<feature type="compositionally biased region" description="Basic and acidic residues" evidence="2">
    <location>
        <begin position="172"/>
        <end position="183"/>
    </location>
</feature>
<feature type="compositionally biased region" description="Low complexity" evidence="2">
    <location>
        <begin position="186"/>
        <end position="200"/>
    </location>
</feature>
<feature type="sequence conflict" description="In Ref. 1; CAA92106." evidence="9" ref="1">
    <original>G</original>
    <variation>V</variation>
    <location>
        <position position="24"/>
    </location>
</feature>
<feature type="sequence conflict" description="In Ref. 1; CAA92106." evidence="9" ref="1">
    <original>G</original>
    <variation>V</variation>
    <location>
        <position position="46"/>
    </location>
</feature>
<feature type="sequence conflict" description="In Ref. 2; ABG80549." evidence="9" ref="2">
    <original>G</original>
    <variation>S</variation>
    <location>
        <position position="83"/>
    </location>
</feature>
<feature type="sequence conflict" description="In Ref. 2; ABG80549." evidence="9" ref="2">
    <original>A</original>
    <variation>S</variation>
    <location>
        <position position="85"/>
    </location>
</feature>
<feature type="sequence conflict" description="In Ref. 2; ABG80549." evidence="9" ref="2">
    <original>K</original>
    <variation>E</variation>
    <location>
        <position position="175"/>
    </location>
</feature>
<comment type="function">
    <text evidence="4">Involved in response to drought stress.</text>
</comment>
<comment type="tissue specificity">
    <text evidence="5">Expressed in the shoot apex and leaves.</text>
</comment>
<comment type="induction">
    <text evidence="3 4 6 7">In seedling roots and seedling leaves, induced by salt stress (PubMed:14610885, PubMed:17426956, PubMed:7870812, PubMed:9218720). In seedling roots induced by abscisic acid (ABA) (PubMed:17426956, PubMed:7870812, PubMed:9218720). Induced by cold stress (PubMed:17426956).</text>
</comment>
<comment type="miscellaneous">
    <text evidence="4">Plants overexpressing LEA19 display enhanced drought resistance under field conditions.</text>
</comment>
<comment type="similarity">
    <text evidence="9">Belongs to the LEA type 4 family.</text>
</comment>
<gene>
    <name evidence="9" type="primary">LEA19</name>
    <name evidence="9" type="synonym">LEA</name>
    <name evidence="9" type="synonym">LEA3</name>
    <name evidence="8" type="synonym">LEA3-1</name>
    <name evidence="10" type="ORF">OsI_020113</name>
</gene>
<keyword id="KW-0175">Coiled coil</keyword>
<keyword id="KW-0903">Direct protein sequencing</keyword>
<keyword id="KW-1185">Reference proteome</keyword>
<keyword id="KW-0346">Stress response</keyword>
<dbReference type="EMBL" id="Z68090">
    <property type="protein sequence ID" value="CAA92106.1"/>
    <property type="molecule type" value="mRNA"/>
</dbReference>
<dbReference type="EMBL" id="DQ789359">
    <property type="protein sequence ID" value="ABG80549.1"/>
    <property type="molecule type" value="mRNA"/>
</dbReference>
<dbReference type="EMBL" id="CM000130">
    <property type="protein sequence ID" value="EAY98880.1"/>
    <property type="molecule type" value="Genomic_DNA"/>
</dbReference>
<dbReference type="PIR" id="T03779">
    <property type="entry name" value="T03779"/>
</dbReference>
<dbReference type="SMR" id="A2Y720"/>
<dbReference type="STRING" id="39946.A2Y720"/>
<dbReference type="EnsemblPlants" id="BGIOSGA020289-TA">
    <property type="protein sequence ID" value="BGIOSGA020289-PA"/>
    <property type="gene ID" value="BGIOSGA020289"/>
</dbReference>
<dbReference type="EnsemblPlants" id="OsGoSa_05g0025200.04">
    <property type="protein sequence ID" value="OsGoSa_05g0025200.04"/>
    <property type="gene ID" value="OsGoSa_05g0025200"/>
</dbReference>
<dbReference type="EnsemblPlants" id="OsGoSa_05g0025200.05">
    <property type="protein sequence ID" value="OsGoSa_05g0025200.05"/>
    <property type="gene ID" value="OsGoSa_05g0025200"/>
</dbReference>
<dbReference type="EnsemblPlants" id="OsIR64_05g0024950.04">
    <property type="protein sequence ID" value="OsIR64_05g0024950.04"/>
    <property type="gene ID" value="OsIR64_05g0024950"/>
</dbReference>
<dbReference type="EnsemblPlants" id="OsIR64_05g0024950.05">
    <property type="protein sequence ID" value="OsIR64_05g0024950.05"/>
    <property type="gene ID" value="OsIR64_05g0024950"/>
</dbReference>
<dbReference type="EnsemblPlants" id="OsKYG_05g0025000.01">
    <property type="protein sequence ID" value="OsKYG_05g0025000.01"/>
    <property type="gene ID" value="OsKYG_05g0025000"/>
</dbReference>
<dbReference type="EnsemblPlants" id="OsKYG_05g0025000.04">
    <property type="protein sequence ID" value="OsKYG_05g0025000.04"/>
    <property type="gene ID" value="OsKYG_05g0025000"/>
</dbReference>
<dbReference type="EnsemblPlants" id="OsLaMu_05g0025240.02">
    <property type="protein sequence ID" value="OsLaMu_05g0025240.02"/>
    <property type="gene ID" value="OsLaMu_05g0025240"/>
</dbReference>
<dbReference type="EnsemblPlants" id="OsLaMu_05g0025240.03">
    <property type="protein sequence ID" value="OsLaMu_05g0025240.03"/>
    <property type="gene ID" value="OsLaMu_05g0025240"/>
</dbReference>
<dbReference type="EnsemblPlants" id="OsLima_05g0025120.04">
    <property type="protein sequence ID" value="OsLima_05g0025120.04"/>
    <property type="gene ID" value="OsLima_05g0025120"/>
</dbReference>
<dbReference type="EnsemblPlants" id="OsLima_05g0025120.05">
    <property type="protein sequence ID" value="OsLima_05g0025120.05"/>
    <property type="gene ID" value="OsLima_05g0025120"/>
</dbReference>
<dbReference type="EnsemblPlants" id="OsLiXu_05g0025190.02">
    <property type="protein sequence ID" value="OsLiXu_05g0025190.02"/>
    <property type="gene ID" value="OsLiXu_05g0025190"/>
</dbReference>
<dbReference type="EnsemblPlants" id="OsLiXu_05g0025190.05">
    <property type="protein sequence ID" value="OsLiXu_05g0025190.05"/>
    <property type="gene ID" value="OsLiXu_05g0025190"/>
</dbReference>
<dbReference type="EnsemblPlants" id="OsZS97_05G025420_03">
    <property type="protein sequence ID" value="OsZS97_05G025420_03"/>
    <property type="gene ID" value="OsZS97_05G025420"/>
</dbReference>
<dbReference type="EnsemblPlants" id="OsZS97_05G025420_04">
    <property type="protein sequence ID" value="OsZS97_05G025420_04"/>
    <property type="gene ID" value="OsZS97_05G025420"/>
</dbReference>
<dbReference type="Gramene" id="BGIOSGA020289-TA">
    <property type="protein sequence ID" value="BGIOSGA020289-PA"/>
    <property type="gene ID" value="BGIOSGA020289"/>
</dbReference>
<dbReference type="Gramene" id="OsGoSa_05g0025200.04">
    <property type="protein sequence ID" value="OsGoSa_05g0025200.04"/>
    <property type="gene ID" value="OsGoSa_05g0025200"/>
</dbReference>
<dbReference type="Gramene" id="OsGoSa_05g0025200.05">
    <property type="protein sequence ID" value="OsGoSa_05g0025200.05"/>
    <property type="gene ID" value="OsGoSa_05g0025200"/>
</dbReference>
<dbReference type="Gramene" id="OsIR64_05g0024950.04">
    <property type="protein sequence ID" value="OsIR64_05g0024950.04"/>
    <property type="gene ID" value="OsIR64_05g0024950"/>
</dbReference>
<dbReference type="Gramene" id="OsIR64_05g0024950.05">
    <property type="protein sequence ID" value="OsIR64_05g0024950.05"/>
    <property type="gene ID" value="OsIR64_05g0024950"/>
</dbReference>
<dbReference type="Gramene" id="OsKYG_05g0025000.01">
    <property type="protein sequence ID" value="OsKYG_05g0025000.01"/>
    <property type="gene ID" value="OsKYG_05g0025000"/>
</dbReference>
<dbReference type="Gramene" id="OsKYG_05g0025000.04">
    <property type="protein sequence ID" value="OsKYG_05g0025000.04"/>
    <property type="gene ID" value="OsKYG_05g0025000"/>
</dbReference>
<dbReference type="Gramene" id="OsLaMu_05g0025240.02">
    <property type="protein sequence ID" value="OsLaMu_05g0025240.02"/>
    <property type="gene ID" value="OsLaMu_05g0025240"/>
</dbReference>
<dbReference type="Gramene" id="OsLaMu_05g0025240.03">
    <property type="protein sequence ID" value="OsLaMu_05g0025240.03"/>
    <property type="gene ID" value="OsLaMu_05g0025240"/>
</dbReference>
<dbReference type="Gramene" id="OsLima_05g0025120.04">
    <property type="protein sequence ID" value="OsLima_05g0025120.04"/>
    <property type="gene ID" value="OsLima_05g0025120"/>
</dbReference>
<dbReference type="Gramene" id="OsLima_05g0025120.05">
    <property type="protein sequence ID" value="OsLima_05g0025120.05"/>
    <property type="gene ID" value="OsLima_05g0025120"/>
</dbReference>
<dbReference type="Gramene" id="OsLiXu_05g0025190.02">
    <property type="protein sequence ID" value="OsLiXu_05g0025190.02"/>
    <property type="gene ID" value="OsLiXu_05g0025190"/>
</dbReference>
<dbReference type="Gramene" id="OsLiXu_05g0025190.05">
    <property type="protein sequence ID" value="OsLiXu_05g0025190.05"/>
    <property type="gene ID" value="OsLiXu_05g0025190"/>
</dbReference>
<dbReference type="Gramene" id="OsZS97_05G025420_03">
    <property type="protein sequence ID" value="OsZS97_05G025420_03"/>
    <property type="gene ID" value="OsZS97_05G025420"/>
</dbReference>
<dbReference type="Gramene" id="OsZS97_05G025420_04">
    <property type="protein sequence ID" value="OsZS97_05G025420_04"/>
    <property type="gene ID" value="OsZS97_05G025420"/>
</dbReference>
<dbReference type="HOGENOM" id="CLU_100093_1_0_1"/>
<dbReference type="OMA" id="MDAMATQ"/>
<dbReference type="OrthoDB" id="2193576at2759"/>
<dbReference type="Proteomes" id="UP000007015">
    <property type="component" value="Chromosome 5"/>
</dbReference>
<dbReference type="GO" id="GO:0005634">
    <property type="term" value="C:nucleus"/>
    <property type="evidence" value="ECO:0007669"/>
    <property type="project" value="TreeGrafter"/>
</dbReference>
<dbReference type="GO" id="GO:1902584">
    <property type="term" value="P:positive regulation of response to water deprivation"/>
    <property type="evidence" value="ECO:0000315"/>
    <property type="project" value="UniProtKB"/>
</dbReference>
<dbReference type="Gene3D" id="1.20.120.20">
    <property type="entry name" value="Apolipoprotein"/>
    <property type="match status" value="1"/>
</dbReference>
<dbReference type="PANTHER" id="PTHR47372">
    <property type="entry name" value="DAUER UP-REGULATED-RELATED"/>
    <property type="match status" value="1"/>
</dbReference>
<dbReference type="PANTHER" id="PTHR47372:SF11">
    <property type="entry name" value="RE19971P"/>
    <property type="match status" value="1"/>
</dbReference>
<evidence type="ECO:0000255" key="1"/>
<evidence type="ECO:0000256" key="2">
    <source>
        <dbReference type="SAM" id="MobiDB-lite"/>
    </source>
</evidence>
<evidence type="ECO:0000269" key="3">
    <source>
    </source>
</evidence>
<evidence type="ECO:0000269" key="4">
    <source>
    </source>
</evidence>
<evidence type="ECO:0000269" key="5">
    <source>
    </source>
</evidence>
<evidence type="ECO:0000269" key="6">
    <source>
    </source>
</evidence>
<evidence type="ECO:0000269" key="7">
    <source>
    </source>
</evidence>
<evidence type="ECO:0000303" key="8">
    <source>
    </source>
</evidence>
<evidence type="ECO:0000305" key="9"/>
<evidence type="ECO:0000312" key="10">
    <source>
        <dbReference type="EMBL" id="EAY98880.1"/>
    </source>
</evidence>
<sequence length="200" mass="20467">MASHQDQASYRAGETKAHTEEKAGQVMGASKDKASEAKDRASEAAGHAAGKGQDTKEATKEKAQAAKERASETAQAAKDKTSGTAQAARDKAAESKDQTGGFLGEKTEQAKQKAAETAGAAKQKTAETAQYTKDSAIAGKDKTGSVLQQASEQVKSTVVGAKDAVMSTLGMTEDKAGTDDGANKDTSATAAATETTARDH</sequence>
<accession>A2Y720</accession>
<accession>P83197</accession>
<accession>Q0PMA1</accession>
<accession>Q40696</accession>
<accession>Q40741</accession>
<accession>Q65XN9</accession>
<accession>Q9SBI3</accession>
<organism>
    <name type="scientific">Oryza sativa subsp. indica</name>
    <name type="common">Rice</name>
    <dbReference type="NCBI Taxonomy" id="39946"/>
    <lineage>
        <taxon>Eukaryota</taxon>
        <taxon>Viridiplantae</taxon>
        <taxon>Streptophyta</taxon>
        <taxon>Embryophyta</taxon>
        <taxon>Tracheophyta</taxon>
        <taxon>Spermatophyta</taxon>
        <taxon>Magnoliopsida</taxon>
        <taxon>Liliopsida</taxon>
        <taxon>Poales</taxon>
        <taxon>Poaceae</taxon>
        <taxon>BOP clade</taxon>
        <taxon>Oryzoideae</taxon>
        <taxon>Oryzeae</taxon>
        <taxon>Oryzinae</taxon>
        <taxon>Oryza</taxon>
        <taxon>Oryza sativa</taxon>
    </lineage>
</organism>